<comment type="function">
    <text evidence="1">Exhibits a very high intrinsic GTPase hydrolysis rate. Involved in the addition of a carboxymethylaminomethyl (cmnm) group at the wobble position (U34) of certain tRNAs, forming tRNA-cmnm(5)s(2)U34.</text>
</comment>
<comment type="cofactor">
    <cofactor evidence="1">
        <name>K(+)</name>
        <dbReference type="ChEBI" id="CHEBI:29103"/>
    </cofactor>
    <text evidence="1">Binds 1 potassium ion per subunit.</text>
</comment>
<comment type="subunit">
    <text evidence="1">Homodimer. Heterotetramer of two MnmE and two MnmG subunits.</text>
</comment>
<comment type="subcellular location">
    <subcellularLocation>
        <location evidence="1">Cytoplasm</location>
    </subcellularLocation>
</comment>
<comment type="similarity">
    <text evidence="1">Belongs to the TRAFAC class TrmE-Era-EngA-EngB-Septin-like GTPase superfamily. TrmE GTPase family.</text>
</comment>
<comment type="sequence caution" evidence="2">
    <conflict type="erroneous initiation">
        <sequence resource="EMBL-CDS" id="BAC92766"/>
    </conflict>
</comment>
<proteinExistence type="inferred from homology"/>
<feature type="chain" id="PRO_0000188946" description="tRNA modification GTPase MnmE">
    <location>
        <begin position="1"/>
        <end position="453"/>
    </location>
</feature>
<feature type="domain" description="TrmE-type G">
    <location>
        <begin position="215"/>
        <end position="376"/>
    </location>
</feature>
<feature type="binding site" evidence="1">
    <location>
        <position position="22"/>
    </location>
    <ligand>
        <name>(6S)-5-formyl-5,6,7,8-tetrahydrofolate</name>
        <dbReference type="ChEBI" id="CHEBI:57457"/>
    </ligand>
</feature>
<feature type="binding site" evidence="1">
    <location>
        <position position="79"/>
    </location>
    <ligand>
        <name>(6S)-5-formyl-5,6,7,8-tetrahydrofolate</name>
        <dbReference type="ChEBI" id="CHEBI:57457"/>
    </ligand>
</feature>
<feature type="binding site" evidence="1">
    <location>
        <position position="119"/>
    </location>
    <ligand>
        <name>(6S)-5-formyl-5,6,7,8-tetrahydrofolate</name>
        <dbReference type="ChEBI" id="CHEBI:57457"/>
    </ligand>
</feature>
<feature type="binding site" evidence="1">
    <location>
        <begin position="225"/>
        <end position="230"/>
    </location>
    <ligand>
        <name>GTP</name>
        <dbReference type="ChEBI" id="CHEBI:37565"/>
    </ligand>
</feature>
<feature type="binding site" evidence="1">
    <location>
        <position position="225"/>
    </location>
    <ligand>
        <name>K(+)</name>
        <dbReference type="ChEBI" id="CHEBI:29103"/>
    </ligand>
</feature>
<feature type="binding site" evidence="1">
    <location>
        <position position="229"/>
    </location>
    <ligand>
        <name>Mg(2+)</name>
        <dbReference type="ChEBI" id="CHEBI:18420"/>
    </ligand>
</feature>
<feature type="binding site" evidence="1">
    <location>
        <begin position="244"/>
        <end position="250"/>
    </location>
    <ligand>
        <name>GTP</name>
        <dbReference type="ChEBI" id="CHEBI:37565"/>
    </ligand>
</feature>
<feature type="binding site" evidence="1">
    <location>
        <position position="244"/>
    </location>
    <ligand>
        <name>K(+)</name>
        <dbReference type="ChEBI" id="CHEBI:29103"/>
    </ligand>
</feature>
<feature type="binding site" evidence="1">
    <location>
        <position position="246"/>
    </location>
    <ligand>
        <name>K(+)</name>
        <dbReference type="ChEBI" id="CHEBI:29103"/>
    </ligand>
</feature>
<feature type="binding site" evidence="1">
    <location>
        <position position="249"/>
    </location>
    <ligand>
        <name>K(+)</name>
        <dbReference type="ChEBI" id="CHEBI:29103"/>
    </ligand>
</feature>
<feature type="binding site" evidence="1">
    <location>
        <position position="250"/>
    </location>
    <ligand>
        <name>Mg(2+)</name>
        <dbReference type="ChEBI" id="CHEBI:18420"/>
    </ligand>
</feature>
<feature type="binding site" evidence="1">
    <location>
        <begin position="269"/>
        <end position="272"/>
    </location>
    <ligand>
        <name>GTP</name>
        <dbReference type="ChEBI" id="CHEBI:37565"/>
    </ligand>
</feature>
<feature type="binding site" evidence="1">
    <location>
        <begin position="334"/>
        <end position="337"/>
    </location>
    <ligand>
        <name>GTP</name>
        <dbReference type="ChEBI" id="CHEBI:37565"/>
    </ligand>
</feature>
<feature type="binding site" evidence="1">
    <location>
        <position position="453"/>
    </location>
    <ligand>
        <name>(6S)-5-formyl-5,6,7,8-tetrahydrofolate</name>
        <dbReference type="ChEBI" id="CHEBI:57457"/>
    </ligand>
</feature>
<dbReference type="EC" id="3.6.-.-" evidence="1"/>
<dbReference type="EMBL" id="BA000037">
    <property type="protein sequence ID" value="BAC92766.1"/>
    <property type="status" value="ALT_INIT"/>
    <property type="molecule type" value="Genomic_DNA"/>
</dbReference>
<dbReference type="RefSeq" id="WP_043877006.1">
    <property type="nucleotide sequence ID" value="NC_005139.1"/>
</dbReference>
<dbReference type="SMR" id="Q7MQK6"/>
<dbReference type="STRING" id="672.VV93_v1c30050"/>
<dbReference type="KEGG" id="vvy:VV0002"/>
<dbReference type="PATRIC" id="fig|196600.6.peg.56"/>
<dbReference type="eggNOG" id="COG0486">
    <property type="taxonomic scope" value="Bacteria"/>
</dbReference>
<dbReference type="HOGENOM" id="CLU_019624_4_1_6"/>
<dbReference type="Proteomes" id="UP000002675">
    <property type="component" value="Chromosome I"/>
</dbReference>
<dbReference type="GO" id="GO:0005829">
    <property type="term" value="C:cytosol"/>
    <property type="evidence" value="ECO:0007669"/>
    <property type="project" value="TreeGrafter"/>
</dbReference>
<dbReference type="GO" id="GO:0005525">
    <property type="term" value="F:GTP binding"/>
    <property type="evidence" value="ECO:0007669"/>
    <property type="project" value="UniProtKB-UniRule"/>
</dbReference>
<dbReference type="GO" id="GO:0003924">
    <property type="term" value="F:GTPase activity"/>
    <property type="evidence" value="ECO:0007669"/>
    <property type="project" value="UniProtKB-UniRule"/>
</dbReference>
<dbReference type="GO" id="GO:0046872">
    <property type="term" value="F:metal ion binding"/>
    <property type="evidence" value="ECO:0007669"/>
    <property type="project" value="UniProtKB-KW"/>
</dbReference>
<dbReference type="GO" id="GO:0030488">
    <property type="term" value="P:tRNA methylation"/>
    <property type="evidence" value="ECO:0007669"/>
    <property type="project" value="TreeGrafter"/>
</dbReference>
<dbReference type="GO" id="GO:0002098">
    <property type="term" value="P:tRNA wobble uridine modification"/>
    <property type="evidence" value="ECO:0007669"/>
    <property type="project" value="TreeGrafter"/>
</dbReference>
<dbReference type="CDD" id="cd04164">
    <property type="entry name" value="trmE"/>
    <property type="match status" value="1"/>
</dbReference>
<dbReference type="CDD" id="cd14858">
    <property type="entry name" value="TrmE_N"/>
    <property type="match status" value="1"/>
</dbReference>
<dbReference type="FunFam" id="3.30.1360.120:FF:000001">
    <property type="entry name" value="tRNA modification GTPase MnmE"/>
    <property type="match status" value="1"/>
</dbReference>
<dbReference type="FunFam" id="3.40.50.300:FF:000249">
    <property type="entry name" value="tRNA modification GTPase MnmE"/>
    <property type="match status" value="1"/>
</dbReference>
<dbReference type="Gene3D" id="3.40.50.300">
    <property type="entry name" value="P-loop containing nucleotide triphosphate hydrolases"/>
    <property type="match status" value="1"/>
</dbReference>
<dbReference type="Gene3D" id="3.30.1360.120">
    <property type="entry name" value="Probable tRNA modification gtpase trme, domain 1"/>
    <property type="match status" value="1"/>
</dbReference>
<dbReference type="Gene3D" id="1.20.120.430">
    <property type="entry name" value="tRNA modification GTPase MnmE domain 2"/>
    <property type="match status" value="1"/>
</dbReference>
<dbReference type="HAMAP" id="MF_00379">
    <property type="entry name" value="GTPase_MnmE"/>
    <property type="match status" value="1"/>
</dbReference>
<dbReference type="InterPro" id="IPR031168">
    <property type="entry name" value="G_TrmE"/>
</dbReference>
<dbReference type="InterPro" id="IPR006073">
    <property type="entry name" value="GTP-bd"/>
</dbReference>
<dbReference type="InterPro" id="IPR018948">
    <property type="entry name" value="GTP-bd_TrmE_N"/>
</dbReference>
<dbReference type="InterPro" id="IPR004520">
    <property type="entry name" value="GTPase_MnmE"/>
</dbReference>
<dbReference type="InterPro" id="IPR027368">
    <property type="entry name" value="MnmE_dom2"/>
</dbReference>
<dbReference type="InterPro" id="IPR025867">
    <property type="entry name" value="MnmE_helical"/>
</dbReference>
<dbReference type="InterPro" id="IPR027417">
    <property type="entry name" value="P-loop_NTPase"/>
</dbReference>
<dbReference type="InterPro" id="IPR005225">
    <property type="entry name" value="Small_GTP-bd"/>
</dbReference>
<dbReference type="InterPro" id="IPR027266">
    <property type="entry name" value="TrmE/GcvT_dom1"/>
</dbReference>
<dbReference type="NCBIfam" id="TIGR00450">
    <property type="entry name" value="mnmE_trmE_thdF"/>
    <property type="match status" value="1"/>
</dbReference>
<dbReference type="NCBIfam" id="NF003661">
    <property type="entry name" value="PRK05291.1-3"/>
    <property type="match status" value="1"/>
</dbReference>
<dbReference type="NCBIfam" id="TIGR00231">
    <property type="entry name" value="small_GTP"/>
    <property type="match status" value="1"/>
</dbReference>
<dbReference type="PANTHER" id="PTHR42714">
    <property type="entry name" value="TRNA MODIFICATION GTPASE GTPBP3"/>
    <property type="match status" value="1"/>
</dbReference>
<dbReference type="PANTHER" id="PTHR42714:SF2">
    <property type="entry name" value="TRNA MODIFICATION GTPASE GTPBP3, MITOCHONDRIAL"/>
    <property type="match status" value="1"/>
</dbReference>
<dbReference type="Pfam" id="PF01926">
    <property type="entry name" value="MMR_HSR1"/>
    <property type="match status" value="1"/>
</dbReference>
<dbReference type="Pfam" id="PF12631">
    <property type="entry name" value="MnmE_helical"/>
    <property type="match status" value="1"/>
</dbReference>
<dbReference type="Pfam" id="PF10396">
    <property type="entry name" value="TrmE_N"/>
    <property type="match status" value="1"/>
</dbReference>
<dbReference type="SUPFAM" id="SSF52540">
    <property type="entry name" value="P-loop containing nucleoside triphosphate hydrolases"/>
    <property type="match status" value="1"/>
</dbReference>
<dbReference type="SUPFAM" id="SSF116878">
    <property type="entry name" value="TrmE connector domain"/>
    <property type="match status" value="1"/>
</dbReference>
<dbReference type="PROSITE" id="PS51709">
    <property type="entry name" value="G_TRME"/>
    <property type="match status" value="1"/>
</dbReference>
<reference key="1">
    <citation type="journal article" date="2003" name="Genome Res.">
        <title>Comparative genome analysis of Vibrio vulnificus, a marine pathogen.</title>
        <authorList>
            <person name="Chen C.-Y."/>
            <person name="Wu K.-M."/>
            <person name="Chang Y.-C."/>
            <person name="Chang C.-H."/>
            <person name="Tsai H.-C."/>
            <person name="Liao T.-L."/>
            <person name="Liu Y.-M."/>
            <person name="Chen H.-J."/>
            <person name="Shen A.B.-T."/>
            <person name="Li J.-C."/>
            <person name="Su T.-L."/>
            <person name="Shao C.-P."/>
            <person name="Lee C.-T."/>
            <person name="Hor L.-I."/>
            <person name="Tsai S.-F."/>
        </authorList>
    </citation>
    <scope>NUCLEOTIDE SEQUENCE [LARGE SCALE GENOMIC DNA]</scope>
    <source>
        <strain>YJ016</strain>
    </source>
</reference>
<gene>
    <name evidence="1" type="primary">mnmE</name>
    <name evidence="1" type="synonym">trmE</name>
    <name type="ordered locus">VV0002</name>
</gene>
<organism>
    <name type="scientific">Vibrio vulnificus (strain YJ016)</name>
    <dbReference type="NCBI Taxonomy" id="196600"/>
    <lineage>
        <taxon>Bacteria</taxon>
        <taxon>Pseudomonadati</taxon>
        <taxon>Pseudomonadota</taxon>
        <taxon>Gammaproteobacteria</taxon>
        <taxon>Vibrionales</taxon>
        <taxon>Vibrionaceae</taxon>
        <taxon>Vibrio</taxon>
    </lineage>
</organism>
<keyword id="KW-0963">Cytoplasm</keyword>
<keyword id="KW-0342">GTP-binding</keyword>
<keyword id="KW-0378">Hydrolase</keyword>
<keyword id="KW-0460">Magnesium</keyword>
<keyword id="KW-0479">Metal-binding</keyword>
<keyword id="KW-0547">Nucleotide-binding</keyword>
<keyword id="KW-0630">Potassium</keyword>
<keyword id="KW-0819">tRNA processing</keyword>
<accession>Q7MQK6</accession>
<sequence>MTTDTIVAQATAPGRGGVGIIRVSGPQAAQVALEVTGKTLKARYAEYLPFKAQDGSELDQGIALFFPNPHSFTGEDVLELQGHGGPVVMDMLIKRILTISGVRPARPGEFSERAFLNDKMDLTQAEAIADLIDASSEEAAKSALQSLQGQFSKRIHTLVESLIHLRIYVEAAIDFPEEEIDFLADGKVAGDLQAIIDNLDAVRKEANQGAIMREGMKVVIAGRPNAGKSSLLNALSGKDSAIVTDIAGTTRDVLREHIHIDGMPLHIIDTAGLRDASDEVEKIGIERAWDEIRQADRVLFMVDGTTTDATDPKEIWPDFIDRLPEQIGITVIRNKADQTQESLGICHVSQPTLIRLSAKTGQGVEALRNHLKECMGFSGNSEGGFMARRRHLDALQRAAEHLLIGQEQLEGYMAGEILAEELRIAQQHLNEITGEFSSDDLLGRIFSSFCIGK</sequence>
<evidence type="ECO:0000255" key="1">
    <source>
        <dbReference type="HAMAP-Rule" id="MF_00379"/>
    </source>
</evidence>
<evidence type="ECO:0000305" key="2"/>
<protein>
    <recommendedName>
        <fullName evidence="1">tRNA modification GTPase MnmE</fullName>
        <ecNumber evidence="1">3.6.-.-</ecNumber>
    </recommendedName>
</protein>
<name>MNME_VIBVY</name>